<evidence type="ECO:0000250" key="1"/>
<evidence type="ECO:0000250" key="2">
    <source>
        <dbReference type="UniProtKB" id="P36894"/>
    </source>
</evidence>
<evidence type="ECO:0000250" key="3">
    <source>
        <dbReference type="UniProtKB" id="P36895"/>
    </source>
</evidence>
<evidence type="ECO:0000250" key="4">
    <source>
        <dbReference type="UniProtKB" id="P36898"/>
    </source>
</evidence>
<evidence type="ECO:0000255" key="5"/>
<evidence type="ECO:0000255" key="6">
    <source>
        <dbReference type="PROSITE-ProRule" id="PRU00159"/>
    </source>
</evidence>
<evidence type="ECO:0000255" key="7">
    <source>
        <dbReference type="PROSITE-ProRule" id="PRU00585"/>
    </source>
</evidence>
<evidence type="ECO:0000255" key="8">
    <source>
        <dbReference type="PROSITE-ProRule" id="PRU10027"/>
    </source>
</evidence>
<evidence type="ECO:0000305" key="9"/>
<accession>Q78EA7</accession>
<accession>Q64308</accession>
<keyword id="KW-0067">ATP-binding</keyword>
<keyword id="KW-1003">Cell membrane</keyword>
<keyword id="KW-1015">Disulfide bond</keyword>
<keyword id="KW-0325">Glycoprotein</keyword>
<keyword id="KW-0418">Kinase</keyword>
<keyword id="KW-0460">Magnesium</keyword>
<keyword id="KW-0464">Manganese</keyword>
<keyword id="KW-0472">Membrane</keyword>
<keyword id="KW-0479">Metal-binding</keyword>
<keyword id="KW-0547">Nucleotide-binding</keyword>
<keyword id="KW-0675">Receptor</keyword>
<keyword id="KW-1185">Reference proteome</keyword>
<keyword id="KW-0723">Serine/threonine-protein kinase</keyword>
<keyword id="KW-0732">Signal</keyword>
<keyword id="KW-0808">Transferase</keyword>
<keyword id="KW-0812">Transmembrane</keyword>
<keyword id="KW-1133">Transmembrane helix</keyword>
<sequence>MTQLYTYIRLLGACLFIISHVQGQNLDSMLHGTGMKSDVDQKKPENGVTLAPEDTLPFLKCYCSGHCPDDAINNTCITNGHCFAIIEEDDQGETTLTSGCMKYEGSDFQCKDSPKAQLRRTIECCRTNLCNQYLQPTLPPVVIGPFFDGSVRWLAVLISMAVCIVAMIVFSSCFCYKHYCKSISSRGRYNRDLEQDEAFIPVGESLKDLIDQSQSSGSGSGLPLLVQRTIAKQIQMVRQVGKGRYGEVWMGKWRGEKVAVKVFFTTEEASWFRETEIYQTVLMRHENILGFIAADIKGTGSWTQLYLITDYHENGSLYDFLKCATLDTRALLKLAYSAACGLCHLHTEIYGTQGKPAIAHRDLKSKNILIKKNGSCCIADLGLAVKFNSDTNEVDIPLNTRVGTRRYMAPEVLDESLSKNHFQPYIMADIYSFGLIIWEMARRCITGGIVEEYQLPYYNMVPSDPSYEDMREVVCVKRLRPIVSNRWNSDECLRAVLKLMSECWAHNPASRLTALRIKKTLAKMVESQDVKI</sequence>
<proteinExistence type="evidence at transcript level"/>
<protein>
    <recommendedName>
        <fullName>Bone morphogenetic protein receptor type-1A</fullName>
        <shortName>BMP type-1A receptor</shortName>
        <shortName>BMPR-1A</shortName>
        <ecNumber>2.7.11.30</ecNumber>
    </recommendedName>
    <alternativeName>
        <fullName>Activin receptor-like kinase 3</fullName>
        <shortName>ALK-3</shortName>
    </alternativeName>
    <alternativeName>
        <fullName>Bone morphogenetic protein 4 receptor</fullName>
    </alternativeName>
    <cdAntigenName>CD292</cdAntigenName>
</protein>
<comment type="function">
    <text evidence="3">On ligand binding, forms a receptor complex consisting of two type II and two type I transmembrane serine/threonine kinases. Type II receptors phosphorylate and activate type I receptors which autophosphorylate, then bind and activate SMAD transcriptional regulators. Receptor for BMP2, BMP4, GDF5 and GDF6. Positively regulates chondrocyte differentiation through GDF5 interaction. Mediates induction of adipogenesis by GDF6. May promote the expression of HAMP, potentially via its interaction with BMP2 (By similarity).</text>
</comment>
<comment type="catalytic activity">
    <reaction>
        <text>L-threonyl-[receptor-protein] + ATP = O-phospho-L-threonyl-[receptor-protein] + ADP + H(+)</text>
        <dbReference type="Rhea" id="RHEA:44880"/>
        <dbReference type="Rhea" id="RHEA-COMP:11024"/>
        <dbReference type="Rhea" id="RHEA-COMP:11025"/>
        <dbReference type="ChEBI" id="CHEBI:15378"/>
        <dbReference type="ChEBI" id="CHEBI:30013"/>
        <dbReference type="ChEBI" id="CHEBI:30616"/>
        <dbReference type="ChEBI" id="CHEBI:61977"/>
        <dbReference type="ChEBI" id="CHEBI:456216"/>
        <dbReference type="EC" id="2.7.11.30"/>
    </reaction>
</comment>
<comment type="catalytic activity">
    <reaction>
        <text>L-seryl-[receptor-protein] + ATP = O-phospho-L-seryl-[receptor-protein] + ADP + H(+)</text>
        <dbReference type="Rhea" id="RHEA:18673"/>
        <dbReference type="Rhea" id="RHEA-COMP:11022"/>
        <dbReference type="Rhea" id="RHEA-COMP:11023"/>
        <dbReference type="ChEBI" id="CHEBI:15378"/>
        <dbReference type="ChEBI" id="CHEBI:29999"/>
        <dbReference type="ChEBI" id="CHEBI:30616"/>
        <dbReference type="ChEBI" id="CHEBI:83421"/>
        <dbReference type="ChEBI" id="CHEBI:456216"/>
        <dbReference type="EC" id="2.7.11.30"/>
    </reaction>
</comment>
<comment type="cofactor">
    <cofactor evidence="1">
        <name>Mg(2+)</name>
        <dbReference type="ChEBI" id="CHEBI:18420"/>
    </cofactor>
    <cofactor evidence="1">
        <name>Mn(2+)</name>
        <dbReference type="ChEBI" id="CHEBI:29035"/>
    </cofactor>
</comment>
<comment type="subunit">
    <text evidence="2 3">Interacts with low affinity with GDF5; positively regulates chondrocyte differentiation (By similarity). Interacts with BMP4 (By similarity). Interacts with SCUBE3 (By similarity). Interacts with TSC22D1/TSC-22 (By similarity). Interacts with BMP2; the interaction may induce HAMP expression (By similarity). Interacts with BMP6 (By similarity). Interacts with heterodimers composed of BMP2 and BMP6 in vitro; the interaction may induce HAMP expression (By similarity).</text>
</comment>
<comment type="subcellular location">
    <subcellularLocation>
        <location evidence="4">Cell membrane</location>
        <topology evidence="5">Single-pass type I membrane protein</topology>
    </subcellularLocation>
    <subcellularLocation>
        <location evidence="3">Cell surface</location>
    </subcellularLocation>
</comment>
<comment type="PTM">
    <text evidence="3">Glycosylated.</text>
</comment>
<comment type="similarity">
    <text evidence="9">Belongs to the protein kinase superfamily. TKL Ser/Thr protein kinase family. TGFB receptor subfamily.</text>
</comment>
<dbReference type="EC" id="2.7.11.30"/>
<dbReference type="EMBL" id="S75359">
    <property type="protein sequence ID" value="AAB33865.1"/>
    <property type="molecule type" value="mRNA"/>
</dbReference>
<dbReference type="EMBL" id="D38082">
    <property type="protein sequence ID" value="BAA07275.1"/>
    <property type="molecule type" value="mRNA"/>
</dbReference>
<dbReference type="EMBL" id="D17667">
    <property type="protein sequence ID" value="BAA04549.1"/>
    <property type="molecule type" value="mRNA"/>
</dbReference>
<dbReference type="PIR" id="JC2387">
    <property type="entry name" value="JC2387"/>
</dbReference>
<dbReference type="RefSeq" id="NP_110476.1">
    <property type="nucleotide sequence ID" value="NM_030849.2"/>
</dbReference>
<dbReference type="RefSeq" id="XP_017455745.1">
    <property type="nucleotide sequence ID" value="XM_017600256.1"/>
</dbReference>
<dbReference type="BMRB" id="Q78EA7"/>
<dbReference type="SMR" id="Q78EA7"/>
<dbReference type="BioGRID" id="249504">
    <property type="interactions" value="1"/>
</dbReference>
<dbReference type="FunCoup" id="Q78EA7">
    <property type="interactions" value="2752"/>
</dbReference>
<dbReference type="STRING" id="10116.ENSRNOP00000074885"/>
<dbReference type="GlyCosmos" id="Q78EA7">
    <property type="glycosylation" value="1 site, No reported glycans"/>
</dbReference>
<dbReference type="GlyGen" id="Q78EA7">
    <property type="glycosylation" value="1 site"/>
</dbReference>
<dbReference type="iPTMnet" id="Q78EA7"/>
<dbReference type="PhosphoSitePlus" id="Q78EA7"/>
<dbReference type="PaxDb" id="10116-ENSRNOP00000015047"/>
<dbReference type="Ensembl" id="ENSRNOT00000079554.2">
    <property type="protein sequence ID" value="ENSRNOP00000074885.1"/>
    <property type="gene ID" value="ENSRNOG00000052469.2"/>
</dbReference>
<dbReference type="GeneID" id="81507"/>
<dbReference type="KEGG" id="rno:81507"/>
<dbReference type="UCSC" id="RGD:70989">
    <property type="organism name" value="rat"/>
</dbReference>
<dbReference type="AGR" id="RGD:70989"/>
<dbReference type="CTD" id="657"/>
<dbReference type="RGD" id="70989">
    <property type="gene designation" value="Bmpr1a"/>
</dbReference>
<dbReference type="eggNOG" id="KOG2052">
    <property type="taxonomic scope" value="Eukaryota"/>
</dbReference>
<dbReference type="GeneTree" id="ENSGT00940000156225"/>
<dbReference type="HOGENOM" id="CLU_000288_8_1_1"/>
<dbReference type="InParanoid" id="Q78EA7"/>
<dbReference type="OMA" id="GSCPNNV"/>
<dbReference type="OrthoDB" id="69842at2759"/>
<dbReference type="PhylomeDB" id="Q78EA7"/>
<dbReference type="TreeFam" id="TF314724"/>
<dbReference type="Reactome" id="R-RNO-201451">
    <property type="pathway name" value="Signaling by BMP"/>
</dbReference>
<dbReference type="PRO" id="PR:Q78EA7"/>
<dbReference type="Proteomes" id="UP000002494">
    <property type="component" value="Chromosome 16"/>
</dbReference>
<dbReference type="Bgee" id="ENSRNOG00000052469">
    <property type="expression patterns" value="Expressed in duodenum and 19 other cell types or tissues"/>
</dbReference>
<dbReference type="GO" id="GO:0005901">
    <property type="term" value="C:caveola"/>
    <property type="evidence" value="ECO:0000266"/>
    <property type="project" value="RGD"/>
</dbReference>
<dbReference type="GO" id="GO:0009986">
    <property type="term" value="C:cell surface"/>
    <property type="evidence" value="ECO:0000250"/>
    <property type="project" value="UniProtKB"/>
</dbReference>
<dbReference type="GO" id="GO:0030425">
    <property type="term" value="C:dendrite"/>
    <property type="evidence" value="ECO:0000314"/>
    <property type="project" value="RGD"/>
</dbReference>
<dbReference type="GO" id="GO:0009897">
    <property type="term" value="C:external side of plasma membrane"/>
    <property type="evidence" value="ECO:0000266"/>
    <property type="project" value="RGD"/>
</dbReference>
<dbReference type="GO" id="GO:0043025">
    <property type="term" value="C:neuronal cell body"/>
    <property type="evidence" value="ECO:0000314"/>
    <property type="project" value="RGD"/>
</dbReference>
<dbReference type="GO" id="GO:0005886">
    <property type="term" value="C:plasma membrane"/>
    <property type="evidence" value="ECO:0000266"/>
    <property type="project" value="RGD"/>
</dbReference>
<dbReference type="GO" id="GO:0043235">
    <property type="term" value="C:receptor complex"/>
    <property type="evidence" value="ECO:0000318"/>
    <property type="project" value="GO_Central"/>
</dbReference>
<dbReference type="GO" id="GO:0005524">
    <property type="term" value="F:ATP binding"/>
    <property type="evidence" value="ECO:0000266"/>
    <property type="project" value="RGD"/>
</dbReference>
<dbReference type="GO" id="GO:0036122">
    <property type="term" value="F:BMP binding"/>
    <property type="evidence" value="ECO:0000266"/>
    <property type="project" value="RGD"/>
</dbReference>
<dbReference type="GO" id="GO:0098821">
    <property type="term" value="F:BMP receptor activity"/>
    <property type="evidence" value="ECO:0000250"/>
    <property type="project" value="UniProtKB"/>
</dbReference>
<dbReference type="GO" id="GO:0046872">
    <property type="term" value="F:metal ion binding"/>
    <property type="evidence" value="ECO:0007669"/>
    <property type="project" value="UniProtKB-KW"/>
</dbReference>
<dbReference type="GO" id="GO:0042803">
    <property type="term" value="F:protein homodimerization activity"/>
    <property type="evidence" value="ECO:0000266"/>
    <property type="project" value="RGD"/>
</dbReference>
<dbReference type="GO" id="GO:0004674">
    <property type="term" value="F:protein serine/threonine kinase activity"/>
    <property type="evidence" value="ECO:0000266"/>
    <property type="project" value="RGD"/>
</dbReference>
<dbReference type="GO" id="GO:0046332">
    <property type="term" value="F:SMAD binding"/>
    <property type="evidence" value="ECO:0000266"/>
    <property type="project" value="RGD"/>
</dbReference>
<dbReference type="GO" id="GO:0005025">
    <property type="term" value="F:transforming growth factor beta receptor activity, type I"/>
    <property type="evidence" value="ECO:0000266"/>
    <property type="project" value="RGD"/>
</dbReference>
<dbReference type="GO" id="GO:0001525">
    <property type="term" value="P:angiogenesis"/>
    <property type="evidence" value="ECO:0000266"/>
    <property type="project" value="RGD"/>
</dbReference>
<dbReference type="GO" id="GO:0009952">
    <property type="term" value="P:anterior/posterior pattern specification"/>
    <property type="evidence" value="ECO:0000266"/>
    <property type="project" value="RGD"/>
</dbReference>
<dbReference type="GO" id="GO:0060928">
    <property type="term" value="P:atrioventricular node cell development"/>
    <property type="evidence" value="ECO:0000266"/>
    <property type="project" value="RGD"/>
</dbReference>
<dbReference type="GO" id="GO:0003171">
    <property type="term" value="P:atrioventricular valve development"/>
    <property type="evidence" value="ECO:0000266"/>
    <property type="project" value="RGD"/>
</dbReference>
<dbReference type="GO" id="GO:0030509">
    <property type="term" value="P:BMP signaling pathway"/>
    <property type="evidence" value="ECO:0000250"/>
    <property type="project" value="UniProtKB"/>
</dbReference>
<dbReference type="GO" id="GO:0003161">
    <property type="term" value="P:cardiac conduction system development"/>
    <property type="evidence" value="ECO:0000266"/>
    <property type="project" value="RGD"/>
</dbReference>
<dbReference type="GO" id="GO:0003215">
    <property type="term" value="P:cardiac right ventricle morphogenesis"/>
    <property type="evidence" value="ECO:0000266"/>
    <property type="project" value="RGD"/>
</dbReference>
<dbReference type="GO" id="GO:0051216">
    <property type="term" value="P:cartilage development"/>
    <property type="evidence" value="ECO:0000266"/>
    <property type="project" value="RGD"/>
</dbReference>
<dbReference type="GO" id="GO:0030154">
    <property type="term" value="P:cell differentiation"/>
    <property type="evidence" value="ECO:0000318"/>
    <property type="project" value="GO_Central"/>
</dbReference>
<dbReference type="GO" id="GO:0071773">
    <property type="term" value="P:cellular response to BMP stimulus"/>
    <property type="evidence" value="ECO:0000266"/>
    <property type="project" value="RGD"/>
</dbReference>
<dbReference type="GO" id="GO:0071363">
    <property type="term" value="P:cellular response to growth factor stimulus"/>
    <property type="evidence" value="ECO:0000318"/>
    <property type="project" value="GO_Central"/>
</dbReference>
<dbReference type="GO" id="GO:0021953">
    <property type="term" value="P:central nervous system neuron differentiation"/>
    <property type="evidence" value="ECO:0000266"/>
    <property type="project" value="RGD"/>
</dbReference>
<dbReference type="GO" id="GO:0002062">
    <property type="term" value="P:chondrocyte differentiation"/>
    <property type="evidence" value="ECO:0000266"/>
    <property type="project" value="RGD"/>
</dbReference>
<dbReference type="GO" id="GO:0048589">
    <property type="term" value="P:developmental growth"/>
    <property type="evidence" value="ECO:0000266"/>
    <property type="project" value="RGD"/>
</dbReference>
<dbReference type="GO" id="GO:0035912">
    <property type="term" value="P:dorsal aorta morphogenesis"/>
    <property type="evidence" value="ECO:0000266"/>
    <property type="project" value="RGD"/>
</dbReference>
<dbReference type="GO" id="GO:0009950">
    <property type="term" value="P:dorsal/ventral axis specification"/>
    <property type="evidence" value="ECO:0000266"/>
    <property type="project" value="RGD"/>
</dbReference>
<dbReference type="GO" id="GO:0009953">
    <property type="term" value="P:dorsal/ventral pattern formation"/>
    <property type="evidence" value="ECO:0000266"/>
    <property type="project" value="RGD"/>
</dbReference>
<dbReference type="GO" id="GO:0007398">
    <property type="term" value="P:ectoderm development"/>
    <property type="evidence" value="ECO:0000266"/>
    <property type="project" value="RGD"/>
</dbReference>
<dbReference type="GO" id="GO:0042733">
    <property type="term" value="P:embryonic digit morphogenesis"/>
    <property type="evidence" value="ECO:0000266"/>
    <property type="project" value="RGD"/>
</dbReference>
<dbReference type="GO" id="GO:0048598">
    <property type="term" value="P:embryonic morphogenesis"/>
    <property type="evidence" value="ECO:0000266"/>
    <property type="project" value="RGD"/>
</dbReference>
<dbReference type="GO" id="GO:0048568">
    <property type="term" value="P:embryonic organ development"/>
    <property type="evidence" value="ECO:0000266"/>
    <property type="project" value="RGD"/>
</dbReference>
<dbReference type="GO" id="GO:0003272">
    <property type="term" value="P:endocardial cushion formation"/>
    <property type="evidence" value="ECO:0000266"/>
    <property type="project" value="RGD"/>
</dbReference>
<dbReference type="GO" id="GO:0003203">
    <property type="term" value="P:endocardial cushion morphogenesis"/>
    <property type="evidence" value="ECO:0000266"/>
    <property type="project" value="RGD"/>
</dbReference>
<dbReference type="GO" id="GO:0007492">
    <property type="term" value="P:endoderm development"/>
    <property type="evidence" value="ECO:0000266"/>
    <property type="project" value="RGD"/>
</dbReference>
<dbReference type="GO" id="GO:0050673">
    <property type="term" value="P:epithelial cell proliferation"/>
    <property type="evidence" value="ECO:0000266"/>
    <property type="project" value="RGD"/>
</dbReference>
<dbReference type="GO" id="GO:1905285">
    <property type="term" value="P:fibrous ring of heart morphogenesis"/>
    <property type="evidence" value="ECO:0000266"/>
    <property type="project" value="RGD"/>
</dbReference>
<dbReference type="GO" id="GO:0007507">
    <property type="term" value="P:heart development"/>
    <property type="evidence" value="ECO:0000266"/>
    <property type="project" value="RGD"/>
</dbReference>
<dbReference type="GO" id="GO:0060914">
    <property type="term" value="P:heart formation"/>
    <property type="evidence" value="ECO:0000266"/>
    <property type="project" value="RGD"/>
</dbReference>
<dbReference type="GO" id="GO:0003007">
    <property type="term" value="P:heart morphogenesis"/>
    <property type="evidence" value="ECO:0000266"/>
    <property type="project" value="RGD"/>
</dbReference>
<dbReference type="GO" id="GO:0035137">
    <property type="term" value="P:hindlimb morphogenesis"/>
    <property type="evidence" value="ECO:0000266"/>
    <property type="project" value="RGD"/>
</dbReference>
<dbReference type="GO" id="GO:0006955">
    <property type="term" value="P:immune response"/>
    <property type="evidence" value="ECO:0000266"/>
    <property type="project" value="RGD"/>
</dbReference>
<dbReference type="GO" id="GO:0001701">
    <property type="term" value="P:in utero embryonic development"/>
    <property type="evidence" value="ECO:0000266"/>
    <property type="project" value="RGD"/>
</dbReference>
<dbReference type="GO" id="GO:0048368">
    <property type="term" value="P:lateral mesoderm development"/>
    <property type="evidence" value="ECO:0000266"/>
    <property type="project" value="RGD"/>
</dbReference>
<dbReference type="GO" id="GO:0030324">
    <property type="term" value="P:lung development"/>
    <property type="evidence" value="ECO:0000266"/>
    <property type="project" value="RGD"/>
</dbReference>
<dbReference type="GO" id="GO:0048382">
    <property type="term" value="P:mesendoderm development"/>
    <property type="evidence" value="ECO:0000266"/>
    <property type="project" value="RGD"/>
</dbReference>
<dbReference type="GO" id="GO:0001707">
    <property type="term" value="P:mesoderm formation"/>
    <property type="evidence" value="ECO:0000266"/>
    <property type="project" value="RGD"/>
</dbReference>
<dbReference type="GO" id="GO:0003183">
    <property type="term" value="P:mitral valve morphogenesis"/>
    <property type="evidence" value="ECO:0000266"/>
    <property type="project" value="RGD"/>
</dbReference>
<dbReference type="GO" id="GO:0001880">
    <property type="term" value="P:Mullerian duct regression"/>
    <property type="evidence" value="ECO:0000266"/>
    <property type="project" value="RGD"/>
</dbReference>
<dbReference type="GO" id="GO:0010629">
    <property type="term" value="P:negative regulation of gene expression"/>
    <property type="evidence" value="ECO:0000266"/>
    <property type="project" value="RGD"/>
</dbReference>
<dbReference type="GO" id="GO:0051148">
    <property type="term" value="P:negative regulation of muscle cell differentiation"/>
    <property type="evidence" value="ECO:0000266"/>
    <property type="project" value="RGD"/>
</dbReference>
<dbReference type="GO" id="GO:0050768">
    <property type="term" value="P:negative regulation of neurogenesis"/>
    <property type="evidence" value="ECO:0000266"/>
    <property type="project" value="RGD"/>
</dbReference>
<dbReference type="GO" id="GO:0014912">
    <property type="term" value="P:negative regulation of smooth muscle cell migration"/>
    <property type="evidence" value="ECO:0000266"/>
    <property type="project" value="RGD"/>
</dbReference>
<dbReference type="GO" id="GO:0007399">
    <property type="term" value="P:nervous system development"/>
    <property type="evidence" value="ECO:0000266"/>
    <property type="project" value="RGD"/>
</dbReference>
<dbReference type="GO" id="GO:0014032">
    <property type="term" value="P:neural crest cell development"/>
    <property type="evidence" value="ECO:0000266"/>
    <property type="project" value="RGD"/>
</dbReference>
<dbReference type="GO" id="GO:0021998">
    <property type="term" value="P:neural plate mediolateral regionalization"/>
    <property type="evidence" value="ECO:0000266"/>
    <property type="project" value="RGD"/>
</dbReference>
<dbReference type="GO" id="GO:0060896">
    <property type="term" value="P:neural plate pattern specification"/>
    <property type="evidence" value="ECO:0000266"/>
    <property type="project" value="RGD"/>
</dbReference>
<dbReference type="GO" id="GO:0042475">
    <property type="term" value="P:odontogenesis of dentin-containing tooth"/>
    <property type="evidence" value="ECO:0000266"/>
    <property type="project" value="RGD"/>
</dbReference>
<dbReference type="GO" id="GO:0001649">
    <property type="term" value="P:osteoblast differentiation"/>
    <property type="evidence" value="ECO:0000266"/>
    <property type="project" value="RGD"/>
</dbReference>
<dbReference type="GO" id="GO:0003151">
    <property type="term" value="P:outflow tract morphogenesis"/>
    <property type="evidence" value="ECO:0000266"/>
    <property type="project" value="RGD"/>
</dbReference>
<dbReference type="GO" id="GO:0003148">
    <property type="term" value="P:outflow tract septum morphogenesis"/>
    <property type="evidence" value="ECO:0000266"/>
    <property type="project" value="RGD"/>
</dbReference>
<dbReference type="GO" id="GO:0048339">
    <property type="term" value="P:paraxial mesoderm development"/>
    <property type="evidence" value="ECO:0000266"/>
    <property type="project" value="RGD"/>
</dbReference>
<dbReference type="GO" id="GO:0048352">
    <property type="term" value="P:paraxial mesoderm structural organization"/>
    <property type="evidence" value="ECO:0000266"/>
    <property type="project" value="RGD"/>
</dbReference>
<dbReference type="GO" id="GO:0007389">
    <property type="term" value="P:pattern specification process"/>
    <property type="evidence" value="ECO:0000266"/>
    <property type="project" value="RGD"/>
</dbReference>
<dbReference type="GO" id="GO:0061626">
    <property type="term" value="P:pharyngeal arch artery morphogenesis"/>
    <property type="evidence" value="ECO:0000266"/>
    <property type="project" value="RGD"/>
</dbReference>
<dbReference type="GO" id="GO:0021983">
    <property type="term" value="P:pituitary gland development"/>
    <property type="evidence" value="ECO:0000266"/>
    <property type="project" value="RGD"/>
</dbReference>
<dbReference type="GO" id="GO:0030501">
    <property type="term" value="P:positive regulation of bone mineralization"/>
    <property type="evidence" value="ECO:0000266"/>
    <property type="project" value="RGD"/>
</dbReference>
<dbReference type="GO" id="GO:0060045">
    <property type="term" value="P:positive regulation of cardiac muscle cell proliferation"/>
    <property type="evidence" value="ECO:0000266"/>
    <property type="project" value="RGD"/>
</dbReference>
<dbReference type="GO" id="GO:1904414">
    <property type="term" value="P:positive regulation of cardiac ventricle development"/>
    <property type="evidence" value="ECO:0000266"/>
    <property type="project" value="RGD"/>
</dbReference>
<dbReference type="GO" id="GO:0050679">
    <property type="term" value="P:positive regulation of epithelial cell proliferation"/>
    <property type="evidence" value="ECO:0000266"/>
    <property type="project" value="RGD"/>
</dbReference>
<dbReference type="GO" id="GO:0010628">
    <property type="term" value="P:positive regulation of gene expression"/>
    <property type="evidence" value="ECO:0000266"/>
    <property type="project" value="RGD"/>
</dbReference>
<dbReference type="GO" id="GO:0002053">
    <property type="term" value="P:positive regulation of mesenchymal cell proliferation"/>
    <property type="evidence" value="ECO:0000266"/>
    <property type="project" value="RGD"/>
</dbReference>
<dbReference type="GO" id="GO:1902895">
    <property type="term" value="P:positive regulation of miRNA transcription"/>
    <property type="evidence" value="ECO:0000266"/>
    <property type="project" value="RGD"/>
</dbReference>
<dbReference type="GO" id="GO:0045669">
    <property type="term" value="P:positive regulation of osteoblast differentiation"/>
    <property type="evidence" value="ECO:0000266"/>
    <property type="project" value="RGD"/>
</dbReference>
<dbReference type="GO" id="GO:0060391">
    <property type="term" value="P:positive regulation of SMAD protein signal transduction"/>
    <property type="evidence" value="ECO:0000266"/>
    <property type="project" value="RGD"/>
</dbReference>
<dbReference type="GO" id="GO:0045944">
    <property type="term" value="P:positive regulation of transcription by RNA polymerase II"/>
    <property type="evidence" value="ECO:0000266"/>
    <property type="project" value="RGD"/>
</dbReference>
<dbReference type="GO" id="GO:0032915">
    <property type="term" value="P:positive regulation of transforming growth factor beta2 production"/>
    <property type="evidence" value="ECO:0000266"/>
    <property type="project" value="RGD"/>
</dbReference>
<dbReference type="GO" id="GO:1904707">
    <property type="term" value="P:positive regulation of vascular associated smooth muscle cell proliferation"/>
    <property type="evidence" value="ECO:0000266"/>
    <property type="project" value="RGD"/>
</dbReference>
<dbReference type="GO" id="GO:0060043">
    <property type="term" value="P:regulation of cardiac muscle cell proliferation"/>
    <property type="evidence" value="ECO:0000266"/>
    <property type="project" value="RGD"/>
</dbReference>
<dbReference type="GO" id="GO:2000772">
    <property type="term" value="P:regulation of cellular senescence"/>
    <property type="evidence" value="ECO:0000266"/>
    <property type="project" value="RGD"/>
</dbReference>
<dbReference type="GO" id="GO:0048378">
    <property type="term" value="P:regulation of lateral mesodermal cell fate specification"/>
    <property type="evidence" value="ECO:0000266"/>
    <property type="project" value="RGD"/>
</dbReference>
<dbReference type="GO" id="GO:0060021">
    <property type="term" value="P:roof of mouth development"/>
    <property type="evidence" value="ECO:0000266"/>
    <property type="project" value="RGD"/>
</dbReference>
<dbReference type="GO" id="GO:0035019">
    <property type="term" value="P:somatic stem cell population maintenance"/>
    <property type="evidence" value="ECO:0000266"/>
    <property type="project" value="RGD"/>
</dbReference>
<dbReference type="GO" id="GO:0001756">
    <property type="term" value="P:somitogenesis"/>
    <property type="evidence" value="ECO:0000266"/>
    <property type="project" value="RGD"/>
</dbReference>
<dbReference type="GO" id="GO:0007179">
    <property type="term" value="P:transforming growth factor beta receptor signaling pathway"/>
    <property type="evidence" value="ECO:0000266"/>
    <property type="project" value="RGD"/>
</dbReference>
<dbReference type="GO" id="GO:0003186">
    <property type="term" value="P:tricuspid valve morphogenesis"/>
    <property type="evidence" value="ECO:0000266"/>
    <property type="project" value="RGD"/>
</dbReference>
<dbReference type="GO" id="GO:0003223">
    <property type="term" value="P:ventricular compact myocardium morphogenesis"/>
    <property type="evidence" value="ECO:0000266"/>
    <property type="project" value="RGD"/>
</dbReference>
<dbReference type="GO" id="GO:0060412">
    <property type="term" value="P:ventricular septum morphogenesis"/>
    <property type="evidence" value="ECO:0000266"/>
    <property type="project" value="RGD"/>
</dbReference>
<dbReference type="GO" id="GO:0003222">
    <property type="term" value="P:ventricular trabecula myocardium morphogenesis"/>
    <property type="evidence" value="ECO:0000266"/>
    <property type="project" value="RGD"/>
</dbReference>
<dbReference type="CDD" id="cd14220">
    <property type="entry name" value="STKc_BMPR1a"/>
    <property type="match status" value="1"/>
</dbReference>
<dbReference type="CDD" id="cd23612">
    <property type="entry name" value="TFP_LU_ECD_BMPR1A"/>
    <property type="match status" value="1"/>
</dbReference>
<dbReference type="FunFam" id="1.10.510.10:FF:000018">
    <property type="entry name" value="Receptor protein serine/threonine kinase"/>
    <property type="match status" value="1"/>
</dbReference>
<dbReference type="FunFam" id="2.10.60.10:FF:000001">
    <property type="entry name" value="Receptor protein serine/threonine kinase"/>
    <property type="match status" value="1"/>
</dbReference>
<dbReference type="FunFam" id="3.30.200.20:FF:000055">
    <property type="entry name" value="Receptor protein serine/threonine kinase"/>
    <property type="match status" value="1"/>
</dbReference>
<dbReference type="Gene3D" id="2.10.60.10">
    <property type="entry name" value="CD59"/>
    <property type="match status" value="1"/>
</dbReference>
<dbReference type="Gene3D" id="3.30.200.20">
    <property type="entry name" value="Phosphorylase Kinase, domain 1"/>
    <property type="match status" value="1"/>
</dbReference>
<dbReference type="Gene3D" id="1.10.510.10">
    <property type="entry name" value="Transferase(Phosphotransferase) domain 1"/>
    <property type="match status" value="1"/>
</dbReference>
<dbReference type="InterPro" id="IPR000472">
    <property type="entry name" value="Activin_recp"/>
</dbReference>
<dbReference type="InterPro" id="IPR003605">
    <property type="entry name" value="GS_dom"/>
</dbReference>
<dbReference type="InterPro" id="IPR011009">
    <property type="entry name" value="Kinase-like_dom_sf"/>
</dbReference>
<dbReference type="InterPro" id="IPR000719">
    <property type="entry name" value="Prot_kinase_dom"/>
</dbReference>
<dbReference type="InterPro" id="IPR017441">
    <property type="entry name" value="Protein_kinase_ATP_BS"/>
</dbReference>
<dbReference type="InterPro" id="IPR008271">
    <property type="entry name" value="Ser/Thr_kinase_AS"/>
</dbReference>
<dbReference type="InterPro" id="IPR045860">
    <property type="entry name" value="Snake_toxin-like_sf"/>
</dbReference>
<dbReference type="InterPro" id="IPR000333">
    <property type="entry name" value="TGFB_receptor"/>
</dbReference>
<dbReference type="PANTHER" id="PTHR23255:SF50">
    <property type="entry name" value="BONE MORPHOGENETIC PROTEIN RECEPTOR TYPE-1A"/>
    <property type="match status" value="1"/>
</dbReference>
<dbReference type="PANTHER" id="PTHR23255">
    <property type="entry name" value="TRANSFORMING GROWTH FACTOR-BETA RECEPTOR TYPE I AND II"/>
    <property type="match status" value="1"/>
</dbReference>
<dbReference type="Pfam" id="PF01064">
    <property type="entry name" value="Activin_recp"/>
    <property type="match status" value="1"/>
</dbReference>
<dbReference type="Pfam" id="PF00069">
    <property type="entry name" value="Pkinase"/>
    <property type="match status" value="1"/>
</dbReference>
<dbReference type="Pfam" id="PF08515">
    <property type="entry name" value="TGF_beta_GS"/>
    <property type="match status" value="1"/>
</dbReference>
<dbReference type="SMART" id="SM00467">
    <property type="entry name" value="GS"/>
    <property type="match status" value="1"/>
</dbReference>
<dbReference type="SMART" id="SM00220">
    <property type="entry name" value="S_TKc"/>
    <property type="match status" value="1"/>
</dbReference>
<dbReference type="SUPFAM" id="SSF56112">
    <property type="entry name" value="Protein kinase-like (PK-like)"/>
    <property type="match status" value="1"/>
</dbReference>
<dbReference type="SUPFAM" id="SSF57302">
    <property type="entry name" value="Snake toxin-like"/>
    <property type="match status" value="1"/>
</dbReference>
<dbReference type="PROSITE" id="PS51256">
    <property type="entry name" value="GS"/>
    <property type="match status" value="1"/>
</dbReference>
<dbReference type="PROSITE" id="PS00107">
    <property type="entry name" value="PROTEIN_KINASE_ATP"/>
    <property type="match status" value="1"/>
</dbReference>
<dbReference type="PROSITE" id="PS50011">
    <property type="entry name" value="PROTEIN_KINASE_DOM"/>
    <property type="match status" value="1"/>
</dbReference>
<dbReference type="PROSITE" id="PS00108">
    <property type="entry name" value="PROTEIN_KINASE_ST"/>
    <property type="match status" value="1"/>
</dbReference>
<name>BMR1A_RAT</name>
<reference key="1">
    <citation type="journal article" date="1994" name="Kokubyo Gakkai Zasshi">
        <title>Expression of serine/threonine kinase receptors during ectopic bone formation induced by bone morphogenetic protein (BMP).</title>
        <authorList>
            <person name="Takeda K."/>
        </authorList>
    </citation>
    <scope>NUCLEOTIDE SEQUENCE [MRNA]</scope>
</reference>
<reference key="2">
    <citation type="journal article" date="1994" name="Biochem. Biophys. Res. Commun.">
        <title>Molecular cloning of rat bone morphogenetic protein (BMP) type IA receptor and its expression during ectopic bone formation induced by BMP.</title>
        <authorList>
            <person name="Takeda K."/>
            <person name="Oida S."/>
            <person name="Ichijo H."/>
            <person name="Iimura T."/>
            <person name="Maruoka Y."/>
            <person name="Amagasa T."/>
            <person name="Sasaki S."/>
        </authorList>
    </citation>
    <scope>NUCLEOTIDE SEQUENCE [MRNA]</scope>
    <source>
        <strain>Wistar</strain>
        <tissue>Dental pulp</tissue>
    </source>
</reference>
<reference key="3">
    <citation type="submission" date="1993-09" db="EMBL/GenBank/DDBJ databases">
        <title>Expression pattern of bone morphogenetic protein 4 receptor in embryo and adult rat.</title>
        <authorList>
            <person name="Ikeda T."/>
            <person name="Takahashi H."/>
        </authorList>
    </citation>
    <scope>NUCLEOTIDE SEQUENCE [MRNA]</scope>
    <source>
        <strain>Wistar</strain>
        <tissue>Brain</tissue>
    </source>
</reference>
<feature type="signal peptide" evidence="5">
    <location>
        <begin position="1"/>
        <end position="23"/>
    </location>
</feature>
<feature type="chain" id="PRO_0000254907" description="Bone morphogenetic protein receptor type-1A">
    <location>
        <begin position="24"/>
        <end position="532"/>
    </location>
</feature>
<feature type="topological domain" description="Extracellular" evidence="5">
    <location>
        <begin position="24"/>
        <end position="152"/>
    </location>
</feature>
<feature type="transmembrane region" description="Helical" evidence="5">
    <location>
        <begin position="153"/>
        <end position="176"/>
    </location>
</feature>
<feature type="topological domain" description="Cytoplasmic" evidence="5">
    <location>
        <begin position="177"/>
        <end position="532"/>
    </location>
</feature>
<feature type="domain" description="GS" evidence="7">
    <location>
        <begin position="204"/>
        <end position="233"/>
    </location>
</feature>
<feature type="domain" description="Protein kinase" evidence="6">
    <location>
        <begin position="234"/>
        <end position="525"/>
    </location>
</feature>
<feature type="region of interest" description="Mediates specificity for BMP ligand" evidence="1">
    <location>
        <begin position="107"/>
        <end position="109"/>
    </location>
</feature>
<feature type="active site" description="Proton acceptor" evidence="6 8">
    <location>
        <position position="362"/>
    </location>
</feature>
<feature type="binding site" evidence="6">
    <location>
        <begin position="240"/>
        <end position="248"/>
    </location>
    <ligand>
        <name>ATP</name>
        <dbReference type="ChEBI" id="CHEBI:30616"/>
    </ligand>
</feature>
<feature type="binding site" evidence="6">
    <location>
        <position position="261"/>
    </location>
    <ligand>
        <name>ATP</name>
        <dbReference type="ChEBI" id="CHEBI:30616"/>
    </ligand>
</feature>
<feature type="glycosylation site" description="N-linked (GlcNAc...) asparagine" evidence="5">
    <location>
        <position position="73"/>
    </location>
</feature>
<feature type="disulfide bond" evidence="2">
    <location>
        <begin position="61"/>
        <end position="82"/>
    </location>
</feature>
<feature type="disulfide bond" evidence="2">
    <location>
        <begin position="63"/>
        <end position="67"/>
    </location>
</feature>
<feature type="disulfide bond" evidence="2">
    <location>
        <begin position="76"/>
        <end position="100"/>
    </location>
</feature>
<feature type="disulfide bond" evidence="2">
    <location>
        <begin position="110"/>
        <end position="124"/>
    </location>
</feature>
<feature type="disulfide bond" evidence="2">
    <location>
        <begin position="125"/>
        <end position="130"/>
    </location>
</feature>
<gene>
    <name type="primary">Bmpr1a</name>
</gene>
<organism>
    <name type="scientific">Rattus norvegicus</name>
    <name type="common">Rat</name>
    <dbReference type="NCBI Taxonomy" id="10116"/>
    <lineage>
        <taxon>Eukaryota</taxon>
        <taxon>Metazoa</taxon>
        <taxon>Chordata</taxon>
        <taxon>Craniata</taxon>
        <taxon>Vertebrata</taxon>
        <taxon>Euteleostomi</taxon>
        <taxon>Mammalia</taxon>
        <taxon>Eutheria</taxon>
        <taxon>Euarchontoglires</taxon>
        <taxon>Glires</taxon>
        <taxon>Rodentia</taxon>
        <taxon>Myomorpha</taxon>
        <taxon>Muroidea</taxon>
        <taxon>Muridae</taxon>
        <taxon>Murinae</taxon>
        <taxon>Rattus</taxon>
    </lineage>
</organism>